<evidence type="ECO:0000256" key="1">
    <source>
        <dbReference type="SAM" id="MobiDB-lite"/>
    </source>
</evidence>
<evidence type="ECO:0000303" key="2">
    <source>
    </source>
</evidence>
<evidence type="ECO:0000305" key="3"/>
<evidence type="ECO:0007744" key="4">
    <source>
    </source>
</evidence>
<evidence type="ECO:0007744" key="5">
    <source>
    </source>
</evidence>
<evidence type="ECO:0007744" key="6">
    <source>
    </source>
</evidence>
<evidence type="ECO:0007744" key="7">
    <source>
    </source>
</evidence>
<evidence type="ECO:0007744" key="8">
    <source>
    </source>
</evidence>
<evidence type="ECO:0007744" key="9">
    <source>
    </source>
</evidence>
<reference key="1">
    <citation type="journal article" date="1995" name="Genes Dev.">
        <title>Trophinin and tastin, a novel cell adhesion molecule complex with potential involvement in embryo implantation.</title>
        <authorList>
            <person name="Fukuda M.N."/>
            <person name="Sato T."/>
            <person name="Nakayama J."/>
            <person name="Klier G."/>
            <person name="Mikami M."/>
            <person name="Aoki D."/>
            <person name="Nozawa S."/>
        </authorList>
    </citation>
    <scope>NUCLEOTIDE SEQUENCE [MRNA] (ISOFORM 1)</scope>
</reference>
<reference key="2">
    <citation type="submission" date="2003-07" db="EMBL/GenBank/DDBJ databases">
        <authorList>
            <person name="Fukuda M."/>
            <person name="Sato T."/>
        </authorList>
    </citation>
    <scope>SEQUENCE REVISION TO 714 AND 742</scope>
</reference>
<reference key="3">
    <citation type="journal article" date="2006" name="Nature">
        <title>The finished DNA sequence of human chromosome 12.</title>
        <authorList>
            <person name="Scherer S.E."/>
            <person name="Muzny D.M."/>
            <person name="Buhay C.J."/>
            <person name="Chen R."/>
            <person name="Cree A."/>
            <person name="Ding Y."/>
            <person name="Dugan-Rocha S."/>
            <person name="Gill R."/>
            <person name="Gunaratne P."/>
            <person name="Harris R.A."/>
            <person name="Hawes A.C."/>
            <person name="Hernandez J."/>
            <person name="Hodgson A.V."/>
            <person name="Hume J."/>
            <person name="Jackson A."/>
            <person name="Khan Z.M."/>
            <person name="Kovar-Smith C."/>
            <person name="Lewis L.R."/>
            <person name="Lozado R.J."/>
            <person name="Metzker M.L."/>
            <person name="Milosavljevic A."/>
            <person name="Miner G.R."/>
            <person name="Montgomery K.T."/>
            <person name="Morgan M.B."/>
            <person name="Nazareth L.V."/>
            <person name="Scott G."/>
            <person name="Sodergren E."/>
            <person name="Song X.-Z."/>
            <person name="Steffen D."/>
            <person name="Lovering R.C."/>
            <person name="Wheeler D.A."/>
            <person name="Worley K.C."/>
            <person name="Yuan Y."/>
            <person name="Zhang Z."/>
            <person name="Adams C.Q."/>
            <person name="Ansari-Lari M.A."/>
            <person name="Ayele M."/>
            <person name="Brown M.J."/>
            <person name="Chen G."/>
            <person name="Chen Z."/>
            <person name="Clerc-Blankenburg K.P."/>
            <person name="Davis C."/>
            <person name="Delgado O."/>
            <person name="Dinh H.H."/>
            <person name="Draper H."/>
            <person name="Gonzalez-Garay M.L."/>
            <person name="Havlak P."/>
            <person name="Jackson L.R."/>
            <person name="Jacob L.S."/>
            <person name="Kelly S.H."/>
            <person name="Li L."/>
            <person name="Li Z."/>
            <person name="Liu J."/>
            <person name="Liu W."/>
            <person name="Lu J."/>
            <person name="Maheshwari M."/>
            <person name="Nguyen B.-V."/>
            <person name="Okwuonu G.O."/>
            <person name="Pasternak S."/>
            <person name="Perez L.M."/>
            <person name="Plopper F.J.H."/>
            <person name="Santibanez J."/>
            <person name="Shen H."/>
            <person name="Tabor P.E."/>
            <person name="Verduzco D."/>
            <person name="Waldron L."/>
            <person name="Wang Q."/>
            <person name="Williams G.A."/>
            <person name="Zhang J."/>
            <person name="Zhou J."/>
            <person name="Allen C.C."/>
            <person name="Amin A.G."/>
            <person name="Anyalebechi V."/>
            <person name="Bailey M."/>
            <person name="Barbaria J.A."/>
            <person name="Bimage K.E."/>
            <person name="Bryant N.P."/>
            <person name="Burch P.E."/>
            <person name="Burkett C.E."/>
            <person name="Burrell K.L."/>
            <person name="Calderon E."/>
            <person name="Cardenas V."/>
            <person name="Carter K."/>
            <person name="Casias K."/>
            <person name="Cavazos I."/>
            <person name="Cavazos S.R."/>
            <person name="Ceasar H."/>
            <person name="Chacko J."/>
            <person name="Chan S.N."/>
            <person name="Chavez D."/>
            <person name="Christopoulos C."/>
            <person name="Chu J."/>
            <person name="Cockrell R."/>
            <person name="Cox C.D."/>
            <person name="Dang M."/>
            <person name="Dathorne S.R."/>
            <person name="David R."/>
            <person name="Davis C.M."/>
            <person name="Davy-Carroll L."/>
            <person name="Deshazo D.R."/>
            <person name="Donlin J.E."/>
            <person name="D'Souza L."/>
            <person name="Eaves K.A."/>
            <person name="Egan A."/>
            <person name="Emery-Cohen A.J."/>
            <person name="Escotto M."/>
            <person name="Flagg N."/>
            <person name="Forbes L.D."/>
            <person name="Gabisi A.M."/>
            <person name="Garza M."/>
            <person name="Hamilton C."/>
            <person name="Henderson N."/>
            <person name="Hernandez O."/>
            <person name="Hines S."/>
            <person name="Hogues M.E."/>
            <person name="Huang M."/>
            <person name="Idlebird D.G."/>
            <person name="Johnson R."/>
            <person name="Jolivet A."/>
            <person name="Jones S."/>
            <person name="Kagan R."/>
            <person name="King L.M."/>
            <person name="Leal B."/>
            <person name="Lebow H."/>
            <person name="Lee S."/>
            <person name="LeVan J.M."/>
            <person name="Lewis L.C."/>
            <person name="London P."/>
            <person name="Lorensuhewa L.M."/>
            <person name="Loulseged H."/>
            <person name="Lovett D.A."/>
            <person name="Lucier A."/>
            <person name="Lucier R.L."/>
            <person name="Ma J."/>
            <person name="Madu R.C."/>
            <person name="Mapua P."/>
            <person name="Martindale A.D."/>
            <person name="Martinez E."/>
            <person name="Massey E."/>
            <person name="Mawhiney S."/>
            <person name="Meador M.G."/>
            <person name="Mendez S."/>
            <person name="Mercado C."/>
            <person name="Mercado I.C."/>
            <person name="Merritt C.E."/>
            <person name="Miner Z.L."/>
            <person name="Minja E."/>
            <person name="Mitchell T."/>
            <person name="Mohabbat F."/>
            <person name="Mohabbat K."/>
            <person name="Montgomery B."/>
            <person name="Moore N."/>
            <person name="Morris S."/>
            <person name="Munidasa M."/>
            <person name="Ngo R.N."/>
            <person name="Nguyen N.B."/>
            <person name="Nickerson E."/>
            <person name="Nwaokelemeh O.O."/>
            <person name="Nwokenkwo S."/>
            <person name="Obregon M."/>
            <person name="Oguh M."/>
            <person name="Oragunye N."/>
            <person name="Oviedo R.J."/>
            <person name="Parish B.J."/>
            <person name="Parker D.N."/>
            <person name="Parrish J."/>
            <person name="Parks K.L."/>
            <person name="Paul H.A."/>
            <person name="Payton B.A."/>
            <person name="Perez A."/>
            <person name="Perrin W."/>
            <person name="Pickens A."/>
            <person name="Primus E.L."/>
            <person name="Pu L.-L."/>
            <person name="Puazo M."/>
            <person name="Quiles M.M."/>
            <person name="Quiroz J.B."/>
            <person name="Rabata D."/>
            <person name="Reeves K."/>
            <person name="Ruiz S.J."/>
            <person name="Shao H."/>
            <person name="Sisson I."/>
            <person name="Sonaike T."/>
            <person name="Sorelle R.P."/>
            <person name="Sutton A.E."/>
            <person name="Svatek A.F."/>
            <person name="Svetz L.A."/>
            <person name="Tamerisa K.S."/>
            <person name="Taylor T.R."/>
            <person name="Teague B."/>
            <person name="Thomas N."/>
            <person name="Thorn R.D."/>
            <person name="Trejos Z.Y."/>
            <person name="Trevino B.K."/>
            <person name="Ukegbu O.N."/>
            <person name="Urban J.B."/>
            <person name="Vasquez L.I."/>
            <person name="Vera V.A."/>
            <person name="Villasana D.M."/>
            <person name="Wang L."/>
            <person name="Ward-Moore S."/>
            <person name="Warren J.T."/>
            <person name="Wei X."/>
            <person name="White F."/>
            <person name="Williamson A.L."/>
            <person name="Wleczyk R."/>
            <person name="Wooden H.S."/>
            <person name="Wooden S.H."/>
            <person name="Yen J."/>
            <person name="Yoon L."/>
            <person name="Yoon V."/>
            <person name="Zorrilla S.E."/>
            <person name="Nelson D."/>
            <person name="Kucherlapati R."/>
            <person name="Weinstock G."/>
            <person name="Gibbs R.A."/>
        </authorList>
    </citation>
    <scope>NUCLEOTIDE SEQUENCE [LARGE SCALE GENOMIC DNA]</scope>
</reference>
<reference key="4">
    <citation type="submission" date="2005-07" db="EMBL/GenBank/DDBJ databases">
        <authorList>
            <person name="Mural R.J."/>
            <person name="Istrail S."/>
            <person name="Sutton G.G."/>
            <person name="Florea L."/>
            <person name="Halpern A.L."/>
            <person name="Mobarry C.M."/>
            <person name="Lippert R."/>
            <person name="Walenz B."/>
            <person name="Shatkay H."/>
            <person name="Dew I."/>
            <person name="Miller J.R."/>
            <person name="Flanigan M.J."/>
            <person name="Edwards N.J."/>
            <person name="Bolanos R."/>
            <person name="Fasulo D."/>
            <person name="Halldorsson B.V."/>
            <person name="Hannenhalli S."/>
            <person name="Turner R."/>
            <person name="Yooseph S."/>
            <person name="Lu F."/>
            <person name="Nusskern D.R."/>
            <person name="Shue B.C."/>
            <person name="Zheng X.H."/>
            <person name="Zhong F."/>
            <person name="Delcher A.L."/>
            <person name="Huson D.H."/>
            <person name="Kravitz S.A."/>
            <person name="Mouchard L."/>
            <person name="Reinert K."/>
            <person name="Remington K.A."/>
            <person name="Clark A.G."/>
            <person name="Waterman M.S."/>
            <person name="Eichler E.E."/>
            <person name="Adams M.D."/>
            <person name="Hunkapiller M.W."/>
            <person name="Myers E.W."/>
            <person name="Venter J.C."/>
        </authorList>
    </citation>
    <scope>NUCLEOTIDE SEQUENCE [LARGE SCALE GENOMIC DNA]</scope>
</reference>
<reference key="5">
    <citation type="journal article" date="2004" name="Genome Res.">
        <title>The status, quality, and expansion of the NIH full-length cDNA project: the Mammalian Gene Collection (MGC).</title>
        <authorList>
            <consortium name="The MGC Project Team"/>
        </authorList>
    </citation>
    <scope>NUCLEOTIDE SEQUENCE [LARGE SCALE MRNA] (ISOFORMS 1; 2 AND 3)</scope>
    <source>
        <tissue>Lymph</tissue>
    </source>
</reference>
<reference key="6">
    <citation type="journal article" date="2006" name="Nat. Biotechnol.">
        <title>A probability-based approach for high-throughput protein phosphorylation analysis and site localization.</title>
        <authorList>
            <person name="Beausoleil S.A."/>
            <person name="Villen J."/>
            <person name="Gerber S.A."/>
            <person name="Rush J."/>
            <person name="Gygi S.P."/>
        </authorList>
    </citation>
    <scope>PHOSPHORYLATION [LARGE SCALE ANALYSIS] AT SER-334 AND SER-344</scope>
    <scope>IDENTIFICATION BY MASS SPECTROMETRY [LARGE SCALE ANALYSIS]</scope>
    <source>
        <tissue>Cervix carcinoma</tissue>
    </source>
</reference>
<reference key="7">
    <citation type="journal article" date="2008" name="Mol. Cell">
        <title>Kinase-selective enrichment enables quantitative phosphoproteomics of the kinome across the cell cycle.</title>
        <authorList>
            <person name="Daub H."/>
            <person name="Olsen J.V."/>
            <person name="Bairlein M."/>
            <person name="Gnad F."/>
            <person name="Oppermann F.S."/>
            <person name="Korner R."/>
            <person name="Greff Z."/>
            <person name="Keri G."/>
            <person name="Stemmann O."/>
            <person name="Mann M."/>
        </authorList>
    </citation>
    <scope>PHOSPHORYLATION [LARGE SCALE ANALYSIS] AT SER-98; SER-334 AND SER-376</scope>
    <scope>IDENTIFICATION BY MASS SPECTROMETRY [LARGE SCALE ANALYSIS]</scope>
    <source>
        <tissue>Cervix carcinoma</tissue>
    </source>
</reference>
<reference key="8">
    <citation type="journal article" date="2008" name="Proc. Natl. Acad. Sci. U.S.A.">
        <title>A quantitative atlas of mitotic phosphorylation.</title>
        <authorList>
            <person name="Dephoure N."/>
            <person name="Zhou C."/>
            <person name="Villen J."/>
            <person name="Beausoleil S.A."/>
            <person name="Bakalarski C.E."/>
            <person name="Elledge S.J."/>
            <person name="Gygi S.P."/>
        </authorList>
    </citation>
    <scope>PHOSPHORYLATION [LARGE SCALE ANALYSIS] AT SER-16; SER-324; SER-334; SER-362 AND THR-363</scope>
    <scope>IDENTIFICATION BY MASS SPECTROMETRY [LARGE SCALE ANALYSIS]</scope>
    <source>
        <tissue>Cervix carcinoma</tissue>
    </source>
</reference>
<reference key="9">
    <citation type="journal article" date="2009" name="Sci. Signal.">
        <title>Quantitative phosphoproteomic analysis of T cell receptor signaling reveals system-wide modulation of protein-protein interactions.</title>
        <authorList>
            <person name="Mayya V."/>
            <person name="Lundgren D.H."/>
            <person name="Hwang S.-I."/>
            <person name="Rezaul K."/>
            <person name="Wu L."/>
            <person name="Eng J.K."/>
            <person name="Rodionov V."/>
            <person name="Han D.K."/>
        </authorList>
    </citation>
    <scope>PHOSPHORYLATION [LARGE SCALE ANALYSIS] AT SER-334</scope>
    <scope>IDENTIFICATION BY MASS SPECTROMETRY [LARGE SCALE ANALYSIS]</scope>
    <source>
        <tissue>Leukemic T-cell</tissue>
    </source>
</reference>
<reference key="10">
    <citation type="journal article" date="2010" name="Sci. Signal.">
        <title>Quantitative phosphoproteomics reveals widespread full phosphorylation site occupancy during mitosis.</title>
        <authorList>
            <person name="Olsen J.V."/>
            <person name="Vermeulen M."/>
            <person name="Santamaria A."/>
            <person name="Kumar C."/>
            <person name="Miller M.L."/>
            <person name="Jensen L.J."/>
            <person name="Gnad F."/>
            <person name="Cox J."/>
            <person name="Jensen T.S."/>
            <person name="Nigg E.A."/>
            <person name="Brunak S."/>
            <person name="Mann M."/>
        </authorList>
    </citation>
    <scope>PHOSPHORYLATION [LARGE SCALE ANALYSIS] AT SER-334</scope>
    <scope>IDENTIFICATION BY MASS SPECTROMETRY [LARGE SCALE ANALYSIS]</scope>
    <source>
        <tissue>Cervix carcinoma</tissue>
    </source>
</reference>
<reference key="11">
    <citation type="journal article" date="2013" name="J. Proteome Res.">
        <title>Toward a comprehensive characterization of a human cancer cell phosphoproteome.</title>
        <authorList>
            <person name="Zhou H."/>
            <person name="Di Palma S."/>
            <person name="Preisinger C."/>
            <person name="Peng M."/>
            <person name="Polat A.N."/>
            <person name="Heck A.J."/>
            <person name="Mohammed S."/>
        </authorList>
    </citation>
    <scope>PHOSPHORYLATION [LARGE SCALE ANALYSIS] AT SER-16; SER-98; SER-170; SER-334 AND SER-376</scope>
    <scope>IDENTIFICATION BY MASS SPECTROMETRY [LARGE SCALE ANALYSIS]</scope>
    <source>
        <tissue>Cervix carcinoma</tissue>
        <tissue>Erythroleukemia</tissue>
    </source>
</reference>
<protein>
    <recommendedName>
        <fullName>Tastin</fullName>
    </recommendedName>
    <alternativeName>
        <fullName>Trophinin-assisting protein</fullName>
    </alternativeName>
    <alternativeName>
        <fullName>Trophinin-associated protein</fullName>
    </alternativeName>
</protein>
<gene>
    <name type="primary">TROAP</name>
</gene>
<name>TROAP_HUMAN</name>
<organism>
    <name type="scientific">Homo sapiens</name>
    <name type="common">Human</name>
    <dbReference type="NCBI Taxonomy" id="9606"/>
    <lineage>
        <taxon>Eukaryota</taxon>
        <taxon>Metazoa</taxon>
        <taxon>Chordata</taxon>
        <taxon>Craniata</taxon>
        <taxon>Vertebrata</taxon>
        <taxon>Euteleostomi</taxon>
        <taxon>Mammalia</taxon>
        <taxon>Eutheria</taxon>
        <taxon>Euarchontoglires</taxon>
        <taxon>Primates</taxon>
        <taxon>Haplorrhini</taxon>
        <taxon>Catarrhini</taxon>
        <taxon>Hominidae</taxon>
        <taxon>Homo</taxon>
    </lineage>
</organism>
<dbReference type="EMBL" id="U04810">
    <property type="protein sequence ID" value="AAA79333.2"/>
    <property type="molecule type" value="mRNA"/>
</dbReference>
<dbReference type="EMBL" id="AC125611">
    <property type="status" value="NOT_ANNOTATED_CDS"/>
    <property type="molecule type" value="Genomic_DNA"/>
</dbReference>
<dbReference type="EMBL" id="CH471111">
    <property type="protein sequence ID" value="EAW58064.1"/>
    <property type="molecule type" value="Genomic_DNA"/>
</dbReference>
<dbReference type="EMBL" id="BC011597">
    <property type="protein sequence ID" value="AAH11597.1"/>
    <property type="molecule type" value="mRNA"/>
</dbReference>
<dbReference type="EMBL" id="BC018627">
    <property type="status" value="NOT_ANNOTATED_CDS"/>
    <property type="molecule type" value="mRNA"/>
</dbReference>
<dbReference type="EMBL" id="BC032583">
    <property type="protein sequence ID" value="AAH32583.1"/>
    <property type="molecule type" value="mRNA"/>
</dbReference>
<dbReference type="CCDS" id="CCDS41779.1">
    <molecule id="Q12815-2"/>
</dbReference>
<dbReference type="CCDS" id="CCDS61117.1">
    <molecule id="Q12815-3"/>
</dbReference>
<dbReference type="CCDS" id="CCDS8784.1">
    <molecule id="Q12815-1"/>
</dbReference>
<dbReference type="PIR" id="I38487">
    <property type="entry name" value="I38487"/>
</dbReference>
<dbReference type="RefSeq" id="NP_001094090.1">
    <molecule id="Q12815-2"/>
    <property type="nucleotide sequence ID" value="NM_001100620.3"/>
</dbReference>
<dbReference type="RefSeq" id="NP_001265253.1">
    <molecule id="Q12815-3"/>
    <property type="nucleotide sequence ID" value="NM_001278324.2"/>
</dbReference>
<dbReference type="RefSeq" id="NP_005471.3">
    <molecule id="Q12815-1"/>
    <property type="nucleotide sequence ID" value="NM_005480.3"/>
</dbReference>
<dbReference type="RefSeq" id="XP_011536027.1">
    <property type="nucleotide sequence ID" value="XM_011537725.2"/>
</dbReference>
<dbReference type="RefSeq" id="XP_054226675.1">
    <molecule id="Q12815-1"/>
    <property type="nucleotide sequence ID" value="XM_054370700.1"/>
</dbReference>
<dbReference type="RefSeq" id="XP_054226681.1">
    <molecule id="Q12815-2"/>
    <property type="nucleotide sequence ID" value="XM_054370706.1"/>
</dbReference>
<dbReference type="RefSeq" id="XP_054226682.1">
    <molecule id="Q12815-3"/>
    <property type="nucleotide sequence ID" value="XM_054370707.1"/>
</dbReference>
<dbReference type="SMR" id="Q12815"/>
<dbReference type="BioGRID" id="115341">
    <property type="interactions" value="63"/>
</dbReference>
<dbReference type="DIP" id="DIP-52951N"/>
<dbReference type="FunCoup" id="Q12815">
    <property type="interactions" value="736"/>
</dbReference>
<dbReference type="IntAct" id="Q12815">
    <property type="interactions" value="47"/>
</dbReference>
<dbReference type="MINT" id="Q12815"/>
<dbReference type="STRING" id="9606.ENSP00000257909"/>
<dbReference type="GlyCosmos" id="Q12815">
    <property type="glycosylation" value="1 site, 1 glycan"/>
</dbReference>
<dbReference type="GlyGen" id="Q12815">
    <property type="glycosylation" value="8 sites, 1 O-linked glycan (6 sites)"/>
</dbReference>
<dbReference type="iPTMnet" id="Q12815"/>
<dbReference type="PhosphoSitePlus" id="Q12815"/>
<dbReference type="BioMuta" id="TROAP"/>
<dbReference type="DMDM" id="223634724"/>
<dbReference type="jPOST" id="Q12815"/>
<dbReference type="MassIVE" id="Q12815"/>
<dbReference type="PaxDb" id="9606-ENSP00000257909"/>
<dbReference type="PeptideAtlas" id="Q12815"/>
<dbReference type="ProteomicsDB" id="28603"/>
<dbReference type="ProteomicsDB" id="58966">
    <molecule id="Q12815-1"/>
</dbReference>
<dbReference type="ProteomicsDB" id="58967">
    <molecule id="Q12815-2"/>
</dbReference>
<dbReference type="Pumba" id="Q12815"/>
<dbReference type="Antibodypedia" id="25932">
    <property type="antibodies" value="79 antibodies from 19 providers"/>
</dbReference>
<dbReference type="DNASU" id="10024"/>
<dbReference type="Ensembl" id="ENST00000257909.8">
    <molecule id="Q12815-1"/>
    <property type="protein sequence ID" value="ENSP00000257909.3"/>
    <property type="gene ID" value="ENSG00000135451.13"/>
</dbReference>
<dbReference type="Ensembl" id="ENST00000380327.9">
    <molecule id="Q12815-2"/>
    <property type="protein sequence ID" value="ENSP00000369684.5"/>
    <property type="gene ID" value="ENSG00000135451.13"/>
</dbReference>
<dbReference type="Ensembl" id="ENST00000548311.5">
    <molecule id="Q12815-3"/>
    <property type="protein sequence ID" value="ENSP00000448313.1"/>
    <property type="gene ID" value="ENSG00000135451.13"/>
</dbReference>
<dbReference type="GeneID" id="10024"/>
<dbReference type="KEGG" id="hsa:10024"/>
<dbReference type="MANE-Select" id="ENST00000257909.8">
    <property type="protein sequence ID" value="ENSP00000257909.3"/>
    <property type="RefSeq nucleotide sequence ID" value="NM_005480.4"/>
    <property type="RefSeq protein sequence ID" value="NP_005471.3"/>
</dbReference>
<dbReference type="UCSC" id="uc001rtv.5">
    <molecule id="Q12815-1"/>
    <property type="organism name" value="human"/>
</dbReference>
<dbReference type="AGR" id="HGNC:12327"/>
<dbReference type="CTD" id="10024"/>
<dbReference type="DisGeNET" id="10024"/>
<dbReference type="GeneCards" id="TROAP"/>
<dbReference type="HGNC" id="HGNC:12327">
    <property type="gene designation" value="TROAP"/>
</dbReference>
<dbReference type="HPA" id="ENSG00000135451">
    <property type="expression patterns" value="Tissue enhanced (bone marrow, lymphoid tissue, testis)"/>
</dbReference>
<dbReference type="MIM" id="603872">
    <property type="type" value="gene"/>
</dbReference>
<dbReference type="neXtProt" id="NX_Q12815"/>
<dbReference type="OpenTargets" id="ENSG00000135451"/>
<dbReference type="PharmGKB" id="PA37003"/>
<dbReference type="VEuPathDB" id="HostDB:ENSG00000135451"/>
<dbReference type="eggNOG" id="ENOG502S991">
    <property type="taxonomic scope" value="Eukaryota"/>
</dbReference>
<dbReference type="GeneTree" id="ENSGT00390000012132"/>
<dbReference type="HOGENOM" id="CLU_020167_0_0_1"/>
<dbReference type="InParanoid" id="Q12815"/>
<dbReference type="OrthoDB" id="8722817at2759"/>
<dbReference type="PAN-GO" id="Q12815">
    <property type="GO annotations" value="0 GO annotations based on evolutionary models"/>
</dbReference>
<dbReference type="PhylomeDB" id="Q12815"/>
<dbReference type="TreeFam" id="TF338049"/>
<dbReference type="PathwayCommons" id="Q12815"/>
<dbReference type="SignaLink" id="Q12815"/>
<dbReference type="BioGRID-ORCS" id="10024">
    <property type="hits" value="56 hits in 1159 CRISPR screens"/>
</dbReference>
<dbReference type="CD-CODE" id="8C2F96ED">
    <property type="entry name" value="Centrosome"/>
</dbReference>
<dbReference type="ChiTaRS" id="TROAP">
    <property type="organism name" value="human"/>
</dbReference>
<dbReference type="GeneWiki" id="TROAP"/>
<dbReference type="GenomeRNAi" id="10024"/>
<dbReference type="Pharos" id="Q12815">
    <property type="development level" value="Tbio"/>
</dbReference>
<dbReference type="PRO" id="PR:Q12815"/>
<dbReference type="Proteomes" id="UP000005640">
    <property type="component" value="Chromosome 12"/>
</dbReference>
<dbReference type="RNAct" id="Q12815">
    <property type="molecule type" value="protein"/>
</dbReference>
<dbReference type="Bgee" id="ENSG00000135451">
    <property type="expression patterns" value="Expressed in oocyte and 139 other cell types or tissues"/>
</dbReference>
<dbReference type="ExpressionAtlas" id="Q12815">
    <property type="expression patterns" value="baseline and differential"/>
</dbReference>
<dbReference type="GO" id="GO:0005737">
    <property type="term" value="C:cytoplasm"/>
    <property type="evidence" value="ECO:0000304"/>
    <property type="project" value="ProtInc"/>
</dbReference>
<dbReference type="GO" id="GO:0007155">
    <property type="term" value="P:cell adhesion"/>
    <property type="evidence" value="ECO:0000304"/>
    <property type="project" value="ProtInc"/>
</dbReference>
<dbReference type="InterPro" id="IPR026133">
    <property type="entry name" value="Tastin"/>
</dbReference>
<dbReference type="PANTHER" id="PTHR15289">
    <property type="entry name" value="TASTIN"/>
    <property type="match status" value="1"/>
</dbReference>
<dbReference type="PANTHER" id="PTHR15289:SF3">
    <property type="entry name" value="TASTIN"/>
    <property type="match status" value="1"/>
</dbReference>
<comment type="function">
    <text>Could be involved with bystin and trophinin in a cell adhesion molecule complex that mediates an initial attachment of the blastocyst to uterine epithelial cells at the time of the embryo implantation.</text>
</comment>
<comment type="subunit">
    <text>Directly binds bystin, and indirectly trophinin.</text>
</comment>
<comment type="interaction">
    <interactant intactId="EBI-2349743">
        <id>Q12815</id>
    </interactant>
    <interactant intactId="EBI-11976299">
        <id>Q5BKX5-3</id>
        <label>ACTMAP</label>
    </interactant>
    <organismsDiffer>false</organismsDiffer>
    <experiments>3</experiments>
</comment>
<comment type="interaction">
    <interactant intactId="EBI-2349743">
        <id>Q12815</id>
    </interactant>
    <interactant intactId="EBI-744695">
        <id>Q8N9N5</id>
        <label>BANP</label>
    </interactant>
    <organismsDiffer>false</organismsDiffer>
    <experiments>4</experiments>
</comment>
<comment type="interaction">
    <interactant intactId="EBI-2349743">
        <id>Q12815</id>
    </interactant>
    <interactant intactId="EBI-358049">
        <id>Q13895</id>
        <label>BYSL</label>
    </interactant>
    <organismsDiffer>false</organismsDiffer>
    <experiments>9</experiments>
</comment>
<comment type="interaction">
    <interactant intactId="EBI-2349743">
        <id>Q12815</id>
    </interactant>
    <interactant intactId="EBI-1053596">
        <id>Q13627</id>
        <label>DYRK1A</label>
    </interactant>
    <organismsDiffer>false</organismsDiffer>
    <experiments>4</experiments>
</comment>
<comment type="interaction">
    <interactant intactId="EBI-2349743">
        <id>Q12815</id>
    </interactant>
    <interactant intactId="EBI-634187">
        <id>Q9Y463</id>
        <label>DYRK1B</label>
    </interactant>
    <organismsDiffer>false</organismsDiffer>
    <experiments>7</experiments>
</comment>
<comment type="interaction">
    <interactant intactId="EBI-2349743">
        <id>Q12815</id>
    </interactant>
    <interactant intactId="EBI-80371">
        <id>Q15303</id>
        <label>ERBB4</label>
    </interactant>
    <organismsDiffer>false</organismsDiffer>
    <experiments>3</experiments>
</comment>
<comment type="interaction">
    <interactant intactId="EBI-2349743">
        <id>Q12815</id>
    </interactant>
    <interactant intactId="EBI-947774">
        <id>O75420</id>
        <label>GIGYF1</label>
    </interactant>
    <organismsDiffer>false</organismsDiffer>
    <experiments>3</experiments>
</comment>
<comment type="interaction">
    <interactant intactId="EBI-2349743">
        <id>Q12815</id>
    </interactant>
    <interactant intactId="EBI-948001">
        <id>Q15323</id>
        <label>KRT31</label>
    </interactant>
    <organismsDiffer>false</organismsDiffer>
    <experiments>3</experiments>
</comment>
<comment type="interaction">
    <interactant intactId="EBI-2349743">
        <id>Q12815</id>
    </interactant>
    <interactant intactId="EBI-10171697">
        <id>Q6A162</id>
        <label>KRT40</label>
    </interactant>
    <organismsDiffer>false</organismsDiffer>
    <experiments>3</experiments>
</comment>
<comment type="interaction">
    <interactant intactId="EBI-2349743">
        <id>Q12815</id>
    </interactant>
    <interactant intactId="EBI-1004115">
        <id>Q15691</id>
        <label>MAPRE1</label>
    </interactant>
    <organismsDiffer>false</organismsDiffer>
    <experiments>10</experiments>
</comment>
<comment type="interaction">
    <interactant intactId="EBI-2349743">
        <id>Q12815</id>
    </interactant>
    <interactant intactId="EBI-726739">
        <id>Q9UPY8</id>
        <label>MAPRE3</label>
    </interactant>
    <organismsDiffer>false</organismsDiffer>
    <experiments>8</experiments>
</comment>
<comment type="interaction">
    <interactant intactId="EBI-2349743">
        <id>Q12815</id>
    </interactant>
    <interactant intactId="EBI-22310682">
        <id>P0DPK4</id>
        <label>NOTCH2NLC</label>
    </interactant>
    <organismsDiffer>false</organismsDiffer>
    <experiments>3</experiments>
</comment>
<comment type="interaction">
    <interactant intactId="EBI-2349743">
        <id>Q12815</id>
    </interactant>
    <interactant intactId="EBI-536879">
        <id>O43482</id>
        <label>OIP5</label>
    </interactant>
    <organismsDiffer>false</organismsDiffer>
    <experiments>3</experiments>
</comment>
<comment type="interaction">
    <interactant intactId="EBI-2349743">
        <id>Q12815</id>
    </interactant>
    <interactant intactId="EBI-11952721">
        <id>Q05BL1</id>
        <label>TP53BP2</label>
    </interactant>
    <organismsDiffer>false</organismsDiffer>
    <experiments>3</experiments>
</comment>
<comment type="interaction">
    <interactant intactId="EBI-2349743">
        <id>Q12815</id>
    </interactant>
    <interactant intactId="EBI-355744">
        <id>Q12933</id>
        <label>TRAF2</label>
    </interactant>
    <organismsDiffer>false</organismsDiffer>
    <experiments>5</experiments>
</comment>
<comment type="interaction">
    <interactant intactId="EBI-2349743">
        <id>Q12815</id>
    </interactant>
    <interactant intactId="EBI-740098">
        <id>P36406</id>
        <label>TRIM23</label>
    </interactant>
    <organismsDiffer>false</organismsDiffer>
    <experiments>5</experiments>
</comment>
<comment type="subcellular location">
    <subcellularLocation>
        <location>Cytoplasm</location>
    </subcellularLocation>
</comment>
<comment type="alternative products">
    <event type="alternative splicing"/>
    <isoform>
        <id>Q12815-1</id>
        <name>1</name>
        <sequence type="displayed"/>
    </isoform>
    <isoform>
        <id>Q12815-2</id>
        <name>2</name>
        <sequence type="described" ref="VSP_042820 VSP_042821"/>
    </isoform>
    <isoform>
        <id>Q12815-3</id>
        <name>3</name>
        <sequence type="described" ref="VSP_055063"/>
    </isoform>
</comment>
<comment type="tissue specificity">
    <text>Strong expression at implantation sites. Was exclusively localized to the apical side of the syncytiotrophoblast. Also found in macrophages.</text>
</comment>
<feature type="chain" id="PRO_0000065636" description="Tastin">
    <location>
        <begin position="1"/>
        <end position="778"/>
    </location>
</feature>
<feature type="repeat" description="1">
    <location>
        <begin position="516"/>
        <end position="548"/>
    </location>
</feature>
<feature type="repeat" description="2">
    <location>
        <begin position="549"/>
        <end position="581"/>
    </location>
</feature>
<feature type="repeat" description="3">
    <location>
        <begin position="582"/>
        <end position="614"/>
    </location>
</feature>
<feature type="repeat" description="4">
    <location>
        <begin position="615"/>
        <end position="647"/>
    </location>
</feature>
<feature type="region of interest" description="Disordered" evidence="1">
    <location>
        <begin position="1"/>
        <end position="115"/>
    </location>
</feature>
<feature type="region of interest" description="Disordered" evidence="1">
    <location>
        <begin position="212"/>
        <end position="244"/>
    </location>
</feature>
<feature type="region of interest" description="Disordered" evidence="1">
    <location>
        <begin position="406"/>
        <end position="425"/>
    </location>
</feature>
<feature type="region of interest" description="Disordered" evidence="1">
    <location>
        <begin position="508"/>
        <end position="587"/>
    </location>
</feature>
<feature type="region of interest" description="4 X 33 AA approximate tandem repeats">
    <location>
        <begin position="516"/>
        <end position="647"/>
    </location>
</feature>
<feature type="region of interest" description="Disordered" evidence="1">
    <location>
        <begin position="600"/>
        <end position="641"/>
    </location>
</feature>
<feature type="compositionally biased region" description="Basic and acidic residues" evidence="1">
    <location>
        <begin position="1"/>
        <end position="11"/>
    </location>
</feature>
<feature type="compositionally biased region" description="Polar residues" evidence="1">
    <location>
        <begin position="235"/>
        <end position="244"/>
    </location>
</feature>
<feature type="compositionally biased region" description="Pro residues" evidence="1">
    <location>
        <begin position="513"/>
        <end position="523"/>
    </location>
</feature>
<feature type="compositionally biased region" description="Basic and acidic residues" evidence="1">
    <location>
        <begin position="560"/>
        <end position="574"/>
    </location>
</feature>
<feature type="compositionally biased region" description="Pro residues" evidence="1">
    <location>
        <begin position="612"/>
        <end position="622"/>
    </location>
</feature>
<feature type="modified residue" description="Phosphoserine" evidence="5 9">
    <location>
        <position position="16"/>
    </location>
</feature>
<feature type="modified residue" description="Phosphoserine" evidence="6 9">
    <location>
        <position position="98"/>
    </location>
</feature>
<feature type="modified residue" description="Phosphoserine" evidence="9">
    <location>
        <position position="170"/>
    </location>
</feature>
<feature type="modified residue" description="Phosphoserine" evidence="5">
    <location>
        <position position="324"/>
    </location>
</feature>
<feature type="modified residue" description="Phosphoserine" evidence="4 5 6 7 8 9">
    <location>
        <position position="334"/>
    </location>
</feature>
<feature type="modified residue" description="Phosphoserine" evidence="4">
    <location>
        <position position="344"/>
    </location>
</feature>
<feature type="modified residue" description="Phosphoserine" evidence="5">
    <location>
        <position position="362"/>
    </location>
</feature>
<feature type="modified residue" description="Phosphothreonine" evidence="5">
    <location>
        <position position="363"/>
    </location>
</feature>
<feature type="modified residue" description="Phosphoserine" evidence="6 9">
    <location>
        <position position="376"/>
    </location>
</feature>
<feature type="splice variant" id="VSP_055063" description="In isoform 3." evidence="2">
    <original>EAPGTIEFVADPAALATILSGEGVKSCHLGRQPSLAKRVLVRGSQGGTTQRVQGVRASAYLAPRTPTHRLDPARASCFSRLEGPGPRGRTLCPQRLQALISPSGPSFHPSTRPSFQELRRETAGSSRTSVSQASGLLLETPVQPAFSLPKGEREVVTHSDEGGVASLGLAQRVPLRENREMSHTRDSHDSHLMPSPAPVAQPLPGHVVPCPSPFGRAQRVPSPGPPTLTSYSVLRRLTVQPKTRFTPMPSTPRVQQAQWLRGVSPQSCSEDPALPWEQVAVRLFDQESCIRSLEGSGKPPVATPSGPHSNRTPSLQEVKIQRIGILQQLLRQEVEGLVGGQCVPLNGGSSLDMVELQPLLTEISRTLNATEHNSGTSHLPGLLKHSGLPKPCLPEECGEPQPCPPAEPGPPEAFCRSEPEIPEPSLQEQLEVPEPYPPAEPRPLESCCRSEPEIPESSRQEQLEVPEPCPPAEPRPLESYCRIEPEIPESSRQEQLEVPEPCPPAEPGPLQPSTQGQSGPPGPCPRVELGASEPCTLEHRSLESSLPPCCSQWAPATTSLIFSSQHPLCASPPICSLQSLRPPAGQAGLSNLAPRTLALRERLKSCLTAIHCFHEARLDDECAFYTSRAPPSGPTRVCTNPVATLLEWQDALCFIPVGSAAPQGSP</original>
    <variation>GAMACTCNHSYSGG</variation>
    <location>
        <begin position="113"/>
        <end position="778"/>
    </location>
</feature>
<feature type="splice variant" id="VSP_042820" description="In isoform 2." evidence="2">
    <original>EAPGTIEFVADPAALATILSGEGVKSCHLGRQ</original>
    <variation>VLVPAPGKLFALRRSPFPPAKCHLARCHGLYL</variation>
    <location>
        <begin position="113"/>
        <end position="144"/>
    </location>
</feature>
<feature type="splice variant" id="VSP_042821" description="In isoform 2." evidence="2">
    <location>
        <begin position="145"/>
        <end position="778"/>
    </location>
</feature>
<feature type="sequence conflict" description="In Ref. 1; AAA79333." evidence="3" ref="1">
    <original>R</original>
    <variation>H</variation>
    <location>
        <position position="224"/>
    </location>
</feature>
<proteinExistence type="evidence at protein level"/>
<keyword id="KW-0025">Alternative splicing</keyword>
<keyword id="KW-0130">Cell adhesion</keyword>
<keyword id="KW-0963">Cytoplasm</keyword>
<keyword id="KW-0597">Phosphoprotein</keyword>
<keyword id="KW-1267">Proteomics identification</keyword>
<keyword id="KW-1185">Reference proteome</keyword>
<keyword id="KW-0677">Repeat</keyword>
<sequence length="778" mass="83857">MTTRQATKDPLLRGVSPTPSKIPVRSQKRTPFPTVTSCAVDQENQDPRRWVQKPPLNIQRPLVDSAGPRPKARHQAETSQRLVGISQPRNPLEELRPSPRGQNVGPGPPAQTEAPGTIEFVADPAALATILSGEGVKSCHLGRQPSLAKRVLVRGSQGGTTQRVQGVRASAYLAPRTPTHRLDPARASCFSRLEGPGPRGRTLCPQRLQALISPSGPSFHPSTRPSFQELRRETAGSSRTSVSQASGLLLETPVQPAFSLPKGEREVVTHSDEGGVASLGLAQRVPLRENREMSHTRDSHDSHLMPSPAPVAQPLPGHVVPCPSPFGRAQRVPSPGPPTLTSYSVLRRLTVQPKTRFTPMPSTPRVQQAQWLRGVSPQSCSEDPALPWEQVAVRLFDQESCIRSLEGSGKPPVATPSGPHSNRTPSLQEVKIQRIGILQQLLRQEVEGLVGGQCVPLNGGSSLDMVELQPLLTEISRTLNATEHNSGTSHLPGLLKHSGLPKPCLPEECGEPQPCPPAEPGPPEAFCRSEPEIPEPSLQEQLEVPEPYPPAEPRPLESCCRSEPEIPESSRQEQLEVPEPCPPAEPRPLESYCRIEPEIPESSRQEQLEVPEPCPPAEPGPLQPSTQGQSGPPGPCPRVELGASEPCTLEHRSLESSLPPCCSQWAPATTSLIFSSQHPLCASPPICSLQSLRPPAGQAGLSNLAPRTLALRERLKSCLTAIHCFHEARLDDECAFYTSRAPPSGPTRVCTNPVATLLEWQDALCFIPVGSAAPQGSP</sequence>
<accession>Q12815</accession>
<accession>F8VSF9</accession>
<accession>Q6PJU7</accession>
<accession>Q8N5B2</accession>